<proteinExistence type="evidence at protein level"/>
<organism>
    <name type="scientific">Saccharomyces cerevisiae (strain ATCC 204508 / S288c)</name>
    <name type="common">Baker's yeast</name>
    <dbReference type="NCBI Taxonomy" id="559292"/>
    <lineage>
        <taxon>Eukaryota</taxon>
        <taxon>Fungi</taxon>
        <taxon>Dikarya</taxon>
        <taxon>Ascomycota</taxon>
        <taxon>Saccharomycotina</taxon>
        <taxon>Saccharomycetes</taxon>
        <taxon>Saccharomycetales</taxon>
        <taxon>Saccharomycetaceae</taxon>
        <taxon>Saccharomyces</taxon>
    </lineage>
</organism>
<keyword id="KW-0131">Cell cycle</keyword>
<keyword id="KW-0132">Cell division</keyword>
<keyword id="KW-0963">Cytoplasm</keyword>
<keyword id="KW-0227">DNA damage</keyword>
<keyword id="KW-0238">DNA-binding</keyword>
<keyword id="KW-0469">Meiosis</keyword>
<keyword id="KW-0539">Nucleus</keyword>
<keyword id="KW-1185">Reference proteome</keyword>
<accession>Q02685</accession>
<accession>D6W3Y8</accession>
<gene>
    <name evidence="8" type="primary">RMI1</name>
    <name evidence="8" type="synonym">NCE4</name>
    <name type="ordered locus">YPL024W</name>
</gene>
<reference evidence="7" key="1">
    <citation type="journal article" date="1997" name="Nature">
        <title>The nucleotide sequence of Saccharomyces cerevisiae chromosome XVI.</title>
        <authorList>
            <person name="Bussey H."/>
            <person name="Storms R.K."/>
            <person name="Ahmed A."/>
            <person name="Albermann K."/>
            <person name="Allen E."/>
            <person name="Ansorge W."/>
            <person name="Araujo R."/>
            <person name="Aparicio A."/>
            <person name="Barrell B.G."/>
            <person name="Badcock K."/>
            <person name="Benes V."/>
            <person name="Botstein D."/>
            <person name="Bowman S."/>
            <person name="Brueckner M."/>
            <person name="Carpenter J."/>
            <person name="Cherry J.M."/>
            <person name="Chung E."/>
            <person name="Churcher C.M."/>
            <person name="Coster F."/>
            <person name="Davis K."/>
            <person name="Davis R.W."/>
            <person name="Dietrich F.S."/>
            <person name="Delius H."/>
            <person name="DiPaolo T."/>
            <person name="Dubois E."/>
            <person name="Duesterhoeft A."/>
            <person name="Duncan M."/>
            <person name="Floeth M."/>
            <person name="Fortin N."/>
            <person name="Friesen J.D."/>
            <person name="Fritz C."/>
            <person name="Goffeau A."/>
            <person name="Hall J."/>
            <person name="Hebling U."/>
            <person name="Heumann K."/>
            <person name="Hilbert H."/>
            <person name="Hillier L.W."/>
            <person name="Hunicke-Smith S."/>
            <person name="Hyman R.W."/>
            <person name="Johnston M."/>
            <person name="Kalman S."/>
            <person name="Kleine K."/>
            <person name="Komp C."/>
            <person name="Kurdi O."/>
            <person name="Lashkari D."/>
            <person name="Lew H."/>
            <person name="Lin A."/>
            <person name="Lin D."/>
            <person name="Louis E.J."/>
            <person name="Marathe R."/>
            <person name="Messenguy F."/>
            <person name="Mewes H.-W."/>
            <person name="Mirtipati S."/>
            <person name="Moestl D."/>
            <person name="Mueller-Auer S."/>
            <person name="Namath A."/>
            <person name="Nentwich U."/>
            <person name="Oefner P."/>
            <person name="Pearson D."/>
            <person name="Petel F.X."/>
            <person name="Pohl T.M."/>
            <person name="Purnelle B."/>
            <person name="Rajandream M.A."/>
            <person name="Rechmann S."/>
            <person name="Rieger M."/>
            <person name="Riles L."/>
            <person name="Roberts D."/>
            <person name="Schaefer M."/>
            <person name="Scharfe M."/>
            <person name="Scherens B."/>
            <person name="Schramm S."/>
            <person name="Schroeder M."/>
            <person name="Sdicu A.-M."/>
            <person name="Tettelin H."/>
            <person name="Urrestarazu L.A."/>
            <person name="Ushinsky S."/>
            <person name="Vierendeels F."/>
            <person name="Vissers S."/>
            <person name="Voss H."/>
            <person name="Walsh S.V."/>
            <person name="Wambutt R."/>
            <person name="Wang Y."/>
            <person name="Wedler E."/>
            <person name="Wedler H."/>
            <person name="Winnett E."/>
            <person name="Zhong W.-W."/>
            <person name="Zollner A."/>
            <person name="Vo D.H."/>
            <person name="Hani J."/>
        </authorList>
    </citation>
    <scope>NUCLEOTIDE SEQUENCE [LARGE SCALE GENOMIC DNA]</scope>
    <source>
        <strain>ATCC 204508 / S288c</strain>
    </source>
</reference>
<reference key="2">
    <citation type="journal article" date="2014" name="G3 (Bethesda)">
        <title>The reference genome sequence of Saccharomyces cerevisiae: Then and now.</title>
        <authorList>
            <person name="Engel S.R."/>
            <person name="Dietrich F.S."/>
            <person name="Fisk D.G."/>
            <person name="Binkley G."/>
            <person name="Balakrishnan R."/>
            <person name="Costanzo M.C."/>
            <person name="Dwight S.S."/>
            <person name="Hitz B.C."/>
            <person name="Karra K."/>
            <person name="Nash R.S."/>
            <person name="Weng S."/>
            <person name="Wong E.D."/>
            <person name="Lloyd P."/>
            <person name="Skrzypek M.S."/>
            <person name="Miyasato S.R."/>
            <person name="Simison M."/>
            <person name="Cherry J.M."/>
        </authorList>
    </citation>
    <scope>GENOME REANNOTATION</scope>
    <source>
        <strain>ATCC 204508 / S288c</strain>
    </source>
</reference>
<reference evidence="6" key="3">
    <citation type="journal article" date="2002" name="Proc. Natl. Acad. Sci. U.S.A.">
        <title>A genome-wide screen for methyl methanesulfonate-sensitive mutants reveals genes required for S phase progression in the presence of DNA damage.</title>
        <authorList>
            <person name="Chang M."/>
            <person name="Bellaoui M."/>
            <person name="Boone C."/>
            <person name="Brown G.W."/>
        </authorList>
    </citation>
    <scope>FUNCTION IN MMS RESISTANCE</scope>
</reference>
<reference evidence="6" key="4">
    <citation type="journal article" date="2003" name="Nature">
        <title>Global analysis of protein localization in budding yeast.</title>
        <authorList>
            <person name="Huh W.-K."/>
            <person name="Falvo J.V."/>
            <person name="Gerke L.C."/>
            <person name="Carroll A.S."/>
            <person name="Howson R.W."/>
            <person name="Weissman J.S."/>
            <person name="O'Shea E.K."/>
        </authorList>
    </citation>
    <scope>SUBCELLULAR LOCATION [LARGE SCALE ANALYSIS]</scope>
</reference>
<reference evidence="6" key="5">
    <citation type="journal article" date="2003" name="Nature">
        <title>Global analysis of protein expression in yeast.</title>
        <authorList>
            <person name="Ghaemmaghami S."/>
            <person name="Huh W.-K."/>
            <person name="Bower K."/>
            <person name="Howson R.W."/>
            <person name="Belle A."/>
            <person name="Dephoure N."/>
            <person name="O'Shea E.K."/>
            <person name="Weissman J.S."/>
        </authorList>
    </citation>
    <scope>LEVEL OF PROTEIN EXPRESSION [LARGE SCALE ANALYSIS]</scope>
</reference>
<reference evidence="6" key="6">
    <citation type="journal article" date="2005" name="EMBO J.">
        <title>RMI1/NCE4, a suppressor of genome instability, encodes a member of the RecQ helicase/Topo III complex.</title>
        <authorList>
            <person name="Chang M."/>
            <person name="Bellaoui M."/>
            <person name="Zhang C."/>
            <person name="Desai R."/>
            <person name="Morozov P."/>
            <person name="Delgado-Cruzata L."/>
            <person name="Rothstein R."/>
            <person name="Freyer G.A."/>
            <person name="Boone C."/>
            <person name="Brown G.W."/>
        </authorList>
    </citation>
    <scope>FUNCTION</scope>
    <scope>INTERACTION WITH SGS1 AND TOP3</scope>
</reference>
<reference evidence="6" key="7">
    <citation type="journal article" date="2005" name="Mol. Cell. Biol.">
        <title>Yeast Rmi1/Nce4 controls genome stability as a subunit of the Sgs1-Top3 complex.</title>
        <authorList>
            <person name="Mullen J.R."/>
            <person name="Nallaseth F.S."/>
            <person name="Lan Y.Q."/>
            <person name="Slagle C.E."/>
            <person name="Brill S.J."/>
        </authorList>
    </citation>
    <scope>FUNCTION</scope>
    <scope>DNA-BINDING</scope>
    <scope>INTERACTION WITH SGS1 AND TOP3</scope>
</reference>
<name>RMI1_YEAST</name>
<dbReference type="EMBL" id="U36624">
    <property type="protein sequence ID" value="AAB68163.1"/>
    <property type="molecule type" value="Genomic_DNA"/>
</dbReference>
<dbReference type="EMBL" id="BK006949">
    <property type="protein sequence ID" value="DAA11404.1"/>
    <property type="molecule type" value="Genomic_DNA"/>
</dbReference>
<dbReference type="PIR" id="S63458">
    <property type="entry name" value="S63458"/>
</dbReference>
<dbReference type="RefSeq" id="NP_015301.1">
    <property type="nucleotide sequence ID" value="NM_001183838.1"/>
</dbReference>
<dbReference type="BioGRID" id="36153">
    <property type="interactions" value="366"/>
</dbReference>
<dbReference type="ComplexPortal" id="CPX-1071">
    <property type="entry name" value="RecQ helicase-Topo III complex"/>
</dbReference>
<dbReference type="DIP" id="DIP-4039N"/>
<dbReference type="FunCoup" id="Q02685">
    <property type="interactions" value="76"/>
</dbReference>
<dbReference type="IntAct" id="Q02685">
    <property type="interactions" value="3"/>
</dbReference>
<dbReference type="MINT" id="Q02685"/>
<dbReference type="STRING" id="4932.YPL024W"/>
<dbReference type="iPTMnet" id="Q02685"/>
<dbReference type="PaxDb" id="4932-YPL024W"/>
<dbReference type="PeptideAtlas" id="Q02685"/>
<dbReference type="EnsemblFungi" id="YPL024W_mRNA">
    <property type="protein sequence ID" value="YPL024W"/>
    <property type="gene ID" value="YPL024W"/>
</dbReference>
<dbReference type="GeneID" id="856083"/>
<dbReference type="KEGG" id="sce:YPL024W"/>
<dbReference type="AGR" id="SGD:S000005945"/>
<dbReference type="SGD" id="S000005945">
    <property type="gene designation" value="RMI1"/>
</dbReference>
<dbReference type="VEuPathDB" id="FungiDB:YPL024W"/>
<dbReference type="eggNOG" id="KOG3683">
    <property type="taxonomic scope" value="Eukaryota"/>
</dbReference>
<dbReference type="HOGENOM" id="CLU_100701_0_0_1"/>
<dbReference type="InParanoid" id="Q02685"/>
<dbReference type="OMA" id="CEYLEAK"/>
<dbReference type="OrthoDB" id="341511at2759"/>
<dbReference type="BioCyc" id="YEAST:G3O-33941-MONOMER"/>
<dbReference type="BioGRID-ORCS" id="856083">
    <property type="hits" value="1 hit in 10 CRISPR screens"/>
</dbReference>
<dbReference type="PRO" id="PR:Q02685"/>
<dbReference type="Proteomes" id="UP000002311">
    <property type="component" value="Chromosome XVI"/>
</dbReference>
<dbReference type="RNAct" id="Q02685">
    <property type="molecule type" value="protein"/>
</dbReference>
<dbReference type="GO" id="GO:0005737">
    <property type="term" value="C:cytoplasm"/>
    <property type="evidence" value="ECO:0007005"/>
    <property type="project" value="SGD"/>
</dbReference>
<dbReference type="GO" id="GO:0043596">
    <property type="term" value="C:nuclear replication fork"/>
    <property type="evidence" value="ECO:0000314"/>
    <property type="project" value="SGD"/>
</dbReference>
<dbReference type="GO" id="GO:0005634">
    <property type="term" value="C:nucleus"/>
    <property type="evidence" value="ECO:0007005"/>
    <property type="project" value="SGD"/>
</dbReference>
<dbReference type="GO" id="GO:0031422">
    <property type="term" value="C:RecQ family helicase-topoisomerase III complex"/>
    <property type="evidence" value="ECO:0000314"/>
    <property type="project" value="SGD"/>
</dbReference>
<dbReference type="GO" id="GO:0008047">
    <property type="term" value="F:enzyme activator activity"/>
    <property type="evidence" value="ECO:0000314"/>
    <property type="project" value="SGD"/>
</dbReference>
<dbReference type="GO" id="GO:0000400">
    <property type="term" value="F:four-way junction DNA binding"/>
    <property type="evidence" value="ECO:0000314"/>
    <property type="project" value="SGD"/>
</dbReference>
<dbReference type="GO" id="GO:0003697">
    <property type="term" value="F:single-stranded DNA binding"/>
    <property type="evidence" value="ECO:0000314"/>
    <property type="project" value="SGD"/>
</dbReference>
<dbReference type="GO" id="GO:0051301">
    <property type="term" value="P:cell division"/>
    <property type="evidence" value="ECO:0007669"/>
    <property type="project" value="UniProtKB-KW"/>
</dbReference>
<dbReference type="GO" id="GO:0006974">
    <property type="term" value="P:DNA damage response"/>
    <property type="evidence" value="ECO:0000316"/>
    <property type="project" value="SGD"/>
</dbReference>
<dbReference type="GO" id="GO:0006265">
    <property type="term" value="P:DNA topological change"/>
    <property type="evidence" value="ECO:0000314"/>
    <property type="project" value="SGD"/>
</dbReference>
<dbReference type="GO" id="GO:0000724">
    <property type="term" value="P:double-strand break repair via homologous recombination"/>
    <property type="evidence" value="ECO:0000314"/>
    <property type="project" value="ComplexPortal"/>
</dbReference>
<dbReference type="GO" id="GO:0051321">
    <property type="term" value="P:meiotic cell cycle"/>
    <property type="evidence" value="ECO:0007669"/>
    <property type="project" value="UniProtKB-KW"/>
</dbReference>
<dbReference type="Gene3D" id="2.40.50.770">
    <property type="entry name" value="RecQ-mediated genome instability protein Rmi1, C-terminal domain"/>
    <property type="match status" value="1"/>
</dbReference>
<dbReference type="InterPro" id="IPR042470">
    <property type="entry name" value="RMI1_N_C_sf"/>
</dbReference>
<dbReference type="InterPro" id="IPR013894">
    <property type="entry name" value="RMI1_OB"/>
</dbReference>
<dbReference type="Pfam" id="PF08585">
    <property type="entry name" value="RMI1_N_C"/>
    <property type="match status" value="1"/>
</dbReference>
<evidence type="ECO:0000269" key="1">
    <source>
    </source>
</evidence>
<evidence type="ECO:0000269" key="2">
    <source>
    </source>
</evidence>
<evidence type="ECO:0000269" key="3">
    <source>
    </source>
</evidence>
<evidence type="ECO:0000269" key="4">
    <source>
    </source>
</evidence>
<evidence type="ECO:0000269" key="5">
    <source>
    </source>
</evidence>
<evidence type="ECO:0000305" key="6"/>
<evidence type="ECO:0000312" key="7">
    <source>
        <dbReference type="EMBL" id="AAB68163.1"/>
    </source>
</evidence>
<evidence type="ECO:0000312" key="8">
    <source>
        <dbReference type="SGD" id="S000005945"/>
    </source>
</evidence>
<comment type="function">
    <text evidence="1 4 5">Structure-specific DNA-binding protein with a preference for cruciform structures. Also binds single-stranded DNA (ssDNA). Functions together with SGS1 and TOP3 to maintain genome integrity. Essential for proper meiotic cell division. Required for normal S-phase progression and DNA damage response. Required for resistance to the DNA-damaging agent methyl methanesulfonate (MMS).</text>
</comment>
<comment type="subunit">
    <text evidence="4 5">Forms a complex with SGS1 and TOP3.</text>
</comment>
<comment type="interaction">
    <interactant intactId="EBI-38690">
        <id>Q02685</id>
    </interactant>
    <interactant intactId="EBI-17059">
        <id>P35187</id>
        <label>SGS1</label>
    </interactant>
    <organismsDiffer>false</organismsDiffer>
    <experiments>8</experiments>
</comment>
<comment type="interaction">
    <interactant intactId="EBI-38690">
        <id>Q02685</id>
    </interactant>
    <interactant intactId="EBI-19365">
        <id>P13099</id>
        <label>TOP3</label>
    </interactant>
    <organismsDiffer>false</organismsDiffer>
    <experiments>9</experiments>
</comment>
<comment type="subcellular location">
    <subcellularLocation>
        <location evidence="2">Cytoplasm</location>
    </subcellularLocation>
    <subcellularLocation>
        <location evidence="2">Nucleus</location>
    </subcellularLocation>
</comment>
<comment type="miscellaneous">
    <text evidence="3">Present with 1500 molecules/cell in log phase SD medium.</text>
</comment>
<comment type="similarity">
    <text evidence="6">Belongs to the RMI1 family.</text>
</comment>
<feature type="chain" id="PRO_0000270571" description="RecQ-mediated genome instability protein 1">
    <location>
        <begin position="1"/>
        <end position="241"/>
    </location>
</feature>
<sequence>MSFSSILSQDITDDITPPAYSATLGSREQIVFRAYQNEPWLAGTASNLILDKKLVIVDRELLFQVLMVENITKSKLTQIDDIKTKLDPKKQKVDRLRSGAQGNGAKKYEVITQVDMEDDGNVADNNCAKENNSNNNSSAAKNKAVFKLTLQSKSGDVFFAINSTPISWSSCMLGSKIVILPGTVFNRGVFILKDSQVIFLGGINRVWNENRDQKFCDYLESKLQRDKQLVNGGSKKRKAND</sequence>
<protein>
    <recommendedName>
        <fullName>RecQ-mediated genome instability protein 1</fullName>
    </recommendedName>
</protein>